<comment type="function">
    <text evidence="1">Catalyzes the reduction of prostaglandin-ethanolamide H(2) (prostamide H(2)) to prostamide F(2alpha) with NADPH as proton donor. Also able to reduce prostaglandin H(2) to prostaglandin F(2alpha) (By similarity).</text>
</comment>
<comment type="catalytic activity">
    <reaction evidence="1">
        <text>prostaglandin H2 + [thioredoxin]-dithiol = prostaglandin F2alpha + [thioredoxin]-disulfide</text>
        <dbReference type="Rhea" id="RHEA:28214"/>
        <dbReference type="Rhea" id="RHEA-COMP:10698"/>
        <dbReference type="Rhea" id="RHEA-COMP:10700"/>
        <dbReference type="ChEBI" id="CHEBI:29950"/>
        <dbReference type="ChEBI" id="CHEBI:50058"/>
        <dbReference type="ChEBI" id="CHEBI:57404"/>
        <dbReference type="ChEBI" id="CHEBI:57405"/>
        <dbReference type="EC" id="1.11.1.20"/>
    </reaction>
</comment>
<comment type="catalytic activity">
    <reaction evidence="1">
        <text>prostamide F2alpha + [thioredoxin]-disulfide = prostamide H2 + [thioredoxin]-dithiol</text>
        <dbReference type="Rhea" id="RHEA:26373"/>
        <dbReference type="Rhea" id="RHEA-COMP:10698"/>
        <dbReference type="Rhea" id="RHEA-COMP:10700"/>
        <dbReference type="ChEBI" id="CHEBI:29950"/>
        <dbReference type="ChEBI" id="CHEBI:50058"/>
        <dbReference type="ChEBI" id="CHEBI:53081"/>
        <dbReference type="ChEBI" id="CHEBI:53082"/>
        <dbReference type="EC" id="1.11.1.20"/>
    </reaction>
</comment>
<comment type="subcellular location">
    <subcellularLocation>
        <location evidence="1">Cytoplasm</location>
        <location evidence="1">Cytosol</location>
    </subcellularLocation>
</comment>
<comment type="similarity">
    <text evidence="2">Belongs to the peroxiredoxin-like PRXL2 family. Prostamide/prostaglandin F synthase subfamily.</text>
</comment>
<dbReference type="EC" id="1.11.1.20" evidence="1"/>
<dbReference type="EMBL" id="BC078028">
    <property type="protein sequence ID" value="AAH78028.1"/>
    <property type="molecule type" value="mRNA"/>
</dbReference>
<dbReference type="RefSeq" id="NP_001087128.1">
    <property type="nucleotide sequence ID" value="NM_001093659.1"/>
</dbReference>
<dbReference type="SMR" id="Q6AZG8"/>
<dbReference type="BioGRID" id="103877">
    <property type="interactions" value="1"/>
</dbReference>
<dbReference type="DNASU" id="447017"/>
<dbReference type="GeneID" id="447017"/>
<dbReference type="KEGG" id="xla:447017"/>
<dbReference type="AGR" id="Xenbase:XB-GENE-6254580"/>
<dbReference type="CTD" id="447017"/>
<dbReference type="Xenbase" id="XB-GENE-6254580">
    <property type="gene designation" value="prxl2b.L"/>
</dbReference>
<dbReference type="OMA" id="QRPVCND"/>
<dbReference type="OrthoDB" id="40334at2759"/>
<dbReference type="Proteomes" id="UP000186698">
    <property type="component" value="Chromosome 7L"/>
</dbReference>
<dbReference type="Bgee" id="447017">
    <property type="expression patterns" value="Expressed in liver and 20 other cell types or tissues"/>
</dbReference>
<dbReference type="GO" id="GO:0005737">
    <property type="term" value="C:cytoplasm"/>
    <property type="evidence" value="ECO:0000318"/>
    <property type="project" value="GO_Central"/>
</dbReference>
<dbReference type="GO" id="GO:0005829">
    <property type="term" value="C:cytosol"/>
    <property type="evidence" value="ECO:0007669"/>
    <property type="project" value="UniProtKB-SubCell"/>
</dbReference>
<dbReference type="GO" id="GO:0016616">
    <property type="term" value="F:oxidoreductase activity, acting on the CH-OH group of donors, NAD or NADP as acceptor"/>
    <property type="evidence" value="ECO:0000250"/>
    <property type="project" value="UniProtKB"/>
</dbReference>
<dbReference type="GO" id="GO:0047017">
    <property type="term" value="F:prostaglandin F synthase activity"/>
    <property type="evidence" value="ECO:0000318"/>
    <property type="project" value="GO_Central"/>
</dbReference>
<dbReference type="GO" id="GO:0001516">
    <property type="term" value="P:prostaglandin biosynthetic process"/>
    <property type="evidence" value="ECO:0000250"/>
    <property type="project" value="UniProtKB"/>
</dbReference>
<dbReference type="CDD" id="cd02970">
    <property type="entry name" value="PRX_like2"/>
    <property type="match status" value="1"/>
</dbReference>
<dbReference type="FunFam" id="3.40.30.10:FF:000243">
    <property type="entry name" value="Prostamide/prostaglandin F synthase"/>
    <property type="match status" value="1"/>
</dbReference>
<dbReference type="Gene3D" id="3.40.30.10">
    <property type="entry name" value="Glutaredoxin"/>
    <property type="match status" value="1"/>
</dbReference>
<dbReference type="InterPro" id="IPR032801">
    <property type="entry name" value="PXL2A/B/C"/>
</dbReference>
<dbReference type="InterPro" id="IPR036249">
    <property type="entry name" value="Thioredoxin-like_sf"/>
</dbReference>
<dbReference type="PANTHER" id="PTHR28630">
    <property type="match status" value="1"/>
</dbReference>
<dbReference type="PANTHER" id="PTHR28630:SF29">
    <property type="entry name" value="PROSTAMIDE_PROSTAGLANDIN F SYNTHASE"/>
    <property type="match status" value="1"/>
</dbReference>
<dbReference type="Pfam" id="PF13911">
    <property type="entry name" value="AhpC-TSA_2"/>
    <property type="match status" value="1"/>
</dbReference>
<dbReference type="SUPFAM" id="SSF52833">
    <property type="entry name" value="Thioredoxin-like"/>
    <property type="match status" value="1"/>
</dbReference>
<accession>Q6AZG8</accession>
<keyword id="KW-0963">Cytoplasm</keyword>
<keyword id="KW-0275">Fatty acid biosynthesis</keyword>
<keyword id="KW-0276">Fatty acid metabolism</keyword>
<keyword id="KW-0444">Lipid biosynthesis</keyword>
<keyword id="KW-0443">Lipid metabolism</keyword>
<keyword id="KW-0521">NADP</keyword>
<keyword id="KW-0560">Oxidoreductase</keyword>
<keyword id="KW-0643">Prostaglandin biosynthesis</keyword>
<keyword id="KW-0644">Prostaglandin metabolism</keyword>
<keyword id="KW-1185">Reference proteome</keyword>
<name>PXL2B_XENLA</name>
<organism>
    <name type="scientific">Xenopus laevis</name>
    <name type="common">African clawed frog</name>
    <dbReference type="NCBI Taxonomy" id="8355"/>
    <lineage>
        <taxon>Eukaryota</taxon>
        <taxon>Metazoa</taxon>
        <taxon>Chordata</taxon>
        <taxon>Craniata</taxon>
        <taxon>Vertebrata</taxon>
        <taxon>Euteleostomi</taxon>
        <taxon>Amphibia</taxon>
        <taxon>Batrachia</taxon>
        <taxon>Anura</taxon>
        <taxon>Pipoidea</taxon>
        <taxon>Pipidae</taxon>
        <taxon>Xenopodinae</taxon>
        <taxon>Xenopus</taxon>
        <taxon>Xenopus</taxon>
    </lineage>
</organism>
<protein>
    <recommendedName>
        <fullName>Prostamide/prostaglandin F synthase</fullName>
        <shortName>Prostamide/PG F synthase</shortName>
        <shortName>Prostamide/PGF synthase</shortName>
        <ecNumber evidence="1">1.11.1.20</ecNumber>
    </recommendedName>
    <alternativeName>
        <fullName>Peroxiredoxin-like 2B</fullName>
    </alternativeName>
</protein>
<evidence type="ECO:0000250" key="1">
    <source>
        <dbReference type="UniProtKB" id="Q9DB60"/>
    </source>
</evidence>
<evidence type="ECO:0000305" key="2"/>
<proteinExistence type="evidence at transcript level"/>
<sequence>MGSLDLAKAGAILVKNALSGEMVELKSLWKEQTTVLLFLRRFGCQICRWIAKDMGKLKESCDVHQIRLVGIGPEEVGLKEFLDGNFFNGELYIDDSKQSYKDLGFKRYSALSVIPAALGKKVRDIVTKANADGVQGNFSGDLLQSGGMLIVSKGGEKVLLHFIQDSPGDYVPLETIVQTLGITANVTESQRPQCNDDVCTR</sequence>
<gene>
    <name type="primary">prxl2b</name>
    <name type="synonym">fam213b</name>
</gene>
<feature type="chain" id="PRO_0000284641" description="Prostamide/prostaglandin F synthase">
    <location>
        <begin position="1"/>
        <end position="201"/>
    </location>
</feature>
<reference key="1">
    <citation type="submission" date="2004-07" db="EMBL/GenBank/DDBJ databases">
        <authorList>
            <consortium name="NIH - Xenopus Gene Collection (XGC) project"/>
        </authorList>
    </citation>
    <scope>NUCLEOTIDE SEQUENCE [LARGE SCALE MRNA]</scope>
    <source>
        <tissue>Embryo</tissue>
    </source>
</reference>